<sequence>MARQYPLNKFRNIGIMAHIDAGKTTSTERILFYTGKTHKIGETHEGAATMDWMVQEQERGITITSAATTCFWKDHQINIIDTPGHVDFTVEVERSLRVLDSAITILDAKGGVEPQTETVWRQADKYQVPRMIFVNKMDILGADFYMSVQTVRDRLRANAVPIQIPIGKEDDYAGHVDLIKMKAVIFDKELGVNYDEVEIPEDLKDKAEEYRSAMIEAIVETDEELMMKYLEGEEISEEEIHTALRKATIANEIVPVLCGTAYKNKGIQHLLDAVLAYLPSPLDIPSIKGVDEDGNEVERHASDDEPLGALAFKIATDPFVGKLAFVRIYSGVMHSGSYVLNSNKNKKERIGRLVKMHANHREEVEELYAGELGAVIGLKNTTTGDTLCDENAPVILESMEFPEPVISVAIEPKTKAAQEKMGIALAKLAEEDPTFKTYTDQETGQVIIAGMGELHLEIIVDRLQREFKVECNVGAPQVAYKETIKNAVKAEGKFVRQSGGRGQYGHCWIELIPHEGEYEFENAIVGGAIPREYIPAVDNGIQEAAQSGILGGYPVINFKVKCYDGSYHDVDSSEMAFKVAGSMAFKNGMAKATPVLLEPVMKVEIVVPEEYMGDVMGDVNSRRGRIEGMNPRGGAQVIAAFVPLSEMFGYATVLRSRTQGRGTYSMEFANYEEVPKSIAEKVVGENK</sequence>
<accession>A0PXU3</accession>
<dbReference type="EMBL" id="CP000382">
    <property type="protein sequence ID" value="ABK61741.1"/>
    <property type="molecule type" value="Genomic_DNA"/>
</dbReference>
<dbReference type="RefSeq" id="WP_011721214.1">
    <property type="nucleotide sequence ID" value="NC_008593.1"/>
</dbReference>
<dbReference type="SMR" id="A0PXU3"/>
<dbReference type="STRING" id="386415.NT01CX_1112"/>
<dbReference type="KEGG" id="cno:NT01CX_1112"/>
<dbReference type="eggNOG" id="COG0480">
    <property type="taxonomic scope" value="Bacteria"/>
</dbReference>
<dbReference type="HOGENOM" id="CLU_002794_4_1_9"/>
<dbReference type="Proteomes" id="UP000008220">
    <property type="component" value="Chromosome"/>
</dbReference>
<dbReference type="GO" id="GO:0005737">
    <property type="term" value="C:cytoplasm"/>
    <property type="evidence" value="ECO:0007669"/>
    <property type="project" value="UniProtKB-SubCell"/>
</dbReference>
<dbReference type="GO" id="GO:0005525">
    <property type="term" value="F:GTP binding"/>
    <property type="evidence" value="ECO:0007669"/>
    <property type="project" value="UniProtKB-UniRule"/>
</dbReference>
<dbReference type="GO" id="GO:0003924">
    <property type="term" value="F:GTPase activity"/>
    <property type="evidence" value="ECO:0007669"/>
    <property type="project" value="InterPro"/>
</dbReference>
<dbReference type="GO" id="GO:0003746">
    <property type="term" value="F:translation elongation factor activity"/>
    <property type="evidence" value="ECO:0007669"/>
    <property type="project" value="UniProtKB-UniRule"/>
</dbReference>
<dbReference type="GO" id="GO:0032790">
    <property type="term" value="P:ribosome disassembly"/>
    <property type="evidence" value="ECO:0007669"/>
    <property type="project" value="TreeGrafter"/>
</dbReference>
<dbReference type="CDD" id="cd01886">
    <property type="entry name" value="EF-G"/>
    <property type="match status" value="1"/>
</dbReference>
<dbReference type="CDD" id="cd16262">
    <property type="entry name" value="EFG_III"/>
    <property type="match status" value="1"/>
</dbReference>
<dbReference type="CDD" id="cd01434">
    <property type="entry name" value="EFG_mtEFG1_IV"/>
    <property type="match status" value="1"/>
</dbReference>
<dbReference type="CDD" id="cd03713">
    <property type="entry name" value="EFG_mtEFG_C"/>
    <property type="match status" value="1"/>
</dbReference>
<dbReference type="CDD" id="cd04088">
    <property type="entry name" value="EFG_mtEFG_II"/>
    <property type="match status" value="1"/>
</dbReference>
<dbReference type="FunFam" id="2.40.30.10:FF:000006">
    <property type="entry name" value="Elongation factor G"/>
    <property type="match status" value="1"/>
</dbReference>
<dbReference type="FunFam" id="3.30.230.10:FF:000003">
    <property type="entry name" value="Elongation factor G"/>
    <property type="match status" value="1"/>
</dbReference>
<dbReference type="FunFam" id="3.30.70.240:FF:000001">
    <property type="entry name" value="Elongation factor G"/>
    <property type="match status" value="1"/>
</dbReference>
<dbReference type="FunFam" id="3.30.70.870:FF:000001">
    <property type="entry name" value="Elongation factor G"/>
    <property type="match status" value="1"/>
</dbReference>
<dbReference type="FunFam" id="3.40.50.300:FF:000029">
    <property type="entry name" value="Elongation factor G"/>
    <property type="match status" value="1"/>
</dbReference>
<dbReference type="Gene3D" id="3.30.230.10">
    <property type="match status" value="1"/>
</dbReference>
<dbReference type="Gene3D" id="3.30.70.240">
    <property type="match status" value="1"/>
</dbReference>
<dbReference type="Gene3D" id="3.30.70.870">
    <property type="entry name" value="Elongation Factor G (Translational Gtpase), domain 3"/>
    <property type="match status" value="1"/>
</dbReference>
<dbReference type="Gene3D" id="3.40.50.300">
    <property type="entry name" value="P-loop containing nucleotide triphosphate hydrolases"/>
    <property type="match status" value="1"/>
</dbReference>
<dbReference type="Gene3D" id="2.40.30.10">
    <property type="entry name" value="Translation factors"/>
    <property type="match status" value="1"/>
</dbReference>
<dbReference type="HAMAP" id="MF_00054_B">
    <property type="entry name" value="EF_G_EF_2_B"/>
    <property type="match status" value="1"/>
</dbReference>
<dbReference type="InterPro" id="IPR053905">
    <property type="entry name" value="EF-G-like_DII"/>
</dbReference>
<dbReference type="InterPro" id="IPR041095">
    <property type="entry name" value="EFG_II"/>
</dbReference>
<dbReference type="InterPro" id="IPR009022">
    <property type="entry name" value="EFG_III"/>
</dbReference>
<dbReference type="InterPro" id="IPR035647">
    <property type="entry name" value="EFG_III/V"/>
</dbReference>
<dbReference type="InterPro" id="IPR047872">
    <property type="entry name" value="EFG_IV"/>
</dbReference>
<dbReference type="InterPro" id="IPR035649">
    <property type="entry name" value="EFG_V"/>
</dbReference>
<dbReference type="InterPro" id="IPR000640">
    <property type="entry name" value="EFG_V-like"/>
</dbReference>
<dbReference type="InterPro" id="IPR031157">
    <property type="entry name" value="G_TR_CS"/>
</dbReference>
<dbReference type="InterPro" id="IPR027417">
    <property type="entry name" value="P-loop_NTPase"/>
</dbReference>
<dbReference type="InterPro" id="IPR020568">
    <property type="entry name" value="Ribosomal_Su5_D2-typ_SF"/>
</dbReference>
<dbReference type="InterPro" id="IPR014721">
    <property type="entry name" value="Ribsml_uS5_D2-typ_fold_subgr"/>
</dbReference>
<dbReference type="InterPro" id="IPR005225">
    <property type="entry name" value="Small_GTP-bd"/>
</dbReference>
<dbReference type="InterPro" id="IPR000795">
    <property type="entry name" value="T_Tr_GTP-bd_dom"/>
</dbReference>
<dbReference type="InterPro" id="IPR009000">
    <property type="entry name" value="Transl_B-barrel_sf"/>
</dbReference>
<dbReference type="InterPro" id="IPR004540">
    <property type="entry name" value="Transl_elong_EFG/EF2"/>
</dbReference>
<dbReference type="InterPro" id="IPR005517">
    <property type="entry name" value="Transl_elong_EFG/EF2_IV"/>
</dbReference>
<dbReference type="NCBIfam" id="TIGR00484">
    <property type="entry name" value="EF-G"/>
    <property type="match status" value="1"/>
</dbReference>
<dbReference type="NCBIfam" id="NF009379">
    <property type="entry name" value="PRK12740.1-3"/>
    <property type="match status" value="1"/>
</dbReference>
<dbReference type="NCBIfam" id="NF009381">
    <property type="entry name" value="PRK12740.1-5"/>
    <property type="match status" value="1"/>
</dbReference>
<dbReference type="NCBIfam" id="TIGR00231">
    <property type="entry name" value="small_GTP"/>
    <property type="match status" value="1"/>
</dbReference>
<dbReference type="PANTHER" id="PTHR43261:SF1">
    <property type="entry name" value="RIBOSOME-RELEASING FACTOR 2, MITOCHONDRIAL"/>
    <property type="match status" value="1"/>
</dbReference>
<dbReference type="PANTHER" id="PTHR43261">
    <property type="entry name" value="TRANSLATION ELONGATION FACTOR G-RELATED"/>
    <property type="match status" value="1"/>
</dbReference>
<dbReference type="Pfam" id="PF22042">
    <property type="entry name" value="EF-G_D2"/>
    <property type="match status" value="1"/>
</dbReference>
<dbReference type="Pfam" id="PF00679">
    <property type="entry name" value="EFG_C"/>
    <property type="match status" value="1"/>
</dbReference>
<dbReference type="Pfam" id="PF14492">
    <property type="entry name" value="EFG_III"/>
    <property type="match status" value="1"/>
</dbReference>
<dbReference type="Pfam" id="PF03764">
    <property type="entry name" value="EFG_IV"/>
    <property type="match status" value="1"/>
</dbReference>
<dbReference type="Pfam" id="PF00009">
    <property type="entry name" value="GTP_EFTU"/>
    <property type="match status" value="1"/>
</dbReference>
<dbReference type="PRINTS" id="PR00315">
    <property type="entry name" value="ELONGATNFCT"/>
</dbReference>
<dbReference type="SMART" id="SM00838">
    <property type="entry name" value="EFG_C"/>
    <property type="match status" value="1"/>
</dbReference>
<dbReference type="SMART" id="SM00889">
    <property type="entry name" value="EFG_IV"/>
    <property type="match status" value="1"/>
</dbReference>
<dbReference type="SUPFAM" id="SSF54980">
    <property type="entry name" value="EF-G C-terminal domain-like"/>
    <property type="match status" value="2"/>
</dbReference>
<dbReference type="SUPFAM" id="SSF52540">
    <property type="entry name" value="P-loop containing nucleoside triphosphate hydrolases"/>
    <property type="match status" value="1"/>
</dbReference>
<dbReference type="SUPFAM" id="SSF54211">
    <property type="entry name" value="Ribosomal protein S5 domain 2-like"/>
    <property type="match status" value="1"/>
</dbReference>
<dbReference type="SUPFAM" id="SSF50447">
    <property type="entry name" value="Translation proteins"/>
    <property type="match status" value="1"/>
</dbReference>
<dbReference type="PROSITE" id="PS00301">
    <property type="entry name" value="G_TR_1"/>
    <property type="match status" value="1"/>
</dbReference>
<dbReference type="PROSITE" id="PS51722">
    <property type="entry name" value="G_TR_2"/>
    <property type="match status" value="1"/>
</dbReference>
<feature type="chain" id="PRO_1000008816" description="Elongation factor G">
    <location>
        <begin position="1"/>
        <end position="687"/>
    </location>
</feature>
<feature type="domain" description="tr-type G">
    <location>
        <begin position="8"/>
        <end position="282"/>
    </location>
</feature>
<feature type="binding site" evidence="1">
    <location>
        <begin position="17"/>
        <end position="24"/>
    </location>
    <ligand>
        <name>GTP</name>
        <dbReference type="ChEBI" id="CHEBI:37565"/>
    </ligand>
</feature>
<feature type="binding site" evidence="1">
    <location>
        <begin position="81"/>
        <end position="85"/>
    </location>
    <ligand>
        <name>GTP</name>
        <dbReference type="ChEBI" id="CHEBI:37565"/>
    </ligand>
</feature>
<feature type="binding site" evidence="1">
    <location>
        <begin position="135"/>
        <end position="138"/>
    </location>
    <ligand>
        <name>GTP</name>
        <dbReference type="ChEBI" id="CHEBI:37565"/>
    </ligand>
</feature>
<comment type="function">
    <text evidence="1">Catalyzes the GTP-dependent ribosomal translocation step during translation elongation. During this step, the ribosome changes from the pre-translocational (PRE) to the post-translocational (POST) state as the newly formed A-site-bound peptidyl-tRNA and P-site-bound deacylated tRNA move to the P and E sites, respectively. Catalyzes the coordinated movement of the two tRNA molecules, the mRNA and conformational changes in the ribosome.</text>
</comment>
<comment type="subcellular location">
    <subcellularLocation>
        <location evidence="1">Cytoplasm</location>
    </subcellularLocation>
</comment>
<comment type="similarity">
    <text evidence="1">Belongs to the TRAFAC class translation factor GTPase superfamily. Classic translation factor GTPase family. EF-G/EF-2 subfamily.</text>
</comment>
<evidence type="ECO:0000255" key="1">
    <source>
        <dbReference type="HAMAP-Rule" id="MF_00054"/>
    </source>
</evidence>
<keyword id="KW-0963">Cytoplasm</keyword>
<keyword id="KW-0251">Elongation factor</keyword>
<keyword id="KW-0342">GTP-binding</keyword>
<keyword id="KW-0547">Nucleotide-binding</keyword>
<keyword id="KW-0648">Protein biosynthesis</keyword>
<keyword id="KW-1185">Reference proteome</keyword>
<reference key="1">
    <citation type="journal article" date="2006" name="Nat. Biotechnol.">
        <title>The genome and transcriptomes of the anti-tumor agent Clostridium novyi-NT.</title>
        <authorList>
            <person name="Bettegowda C."/>
            <person name="Huang X."/>
            <person name="Lin J."/>
            <person name="Cheong I."/>
            <person name="Kohli M."/>
            <person name="Szabo S.A."/>
            <person name="Zhang X."/>
            <person name="Diaz L.A. Jr."/>
            <person name="Velculescu V.E."/>
            <person name="Parmigiani G."/>
            <person name="Kinzler K.W."/>
            <person name="Vogelstein B."/>
            <person name="Zhou S."/>
        </authorList>
    </citation>
    <scope>NUCLEOTIDE SEQUENCE [LARGE SCALE GENOMIC DNA]</scope>
    <source>
        <strain>NT</strain>
    </source>
</reference>
<name>EFG_CLONN</name>
<organism>
    <name type="scientific">Clostridium novyi (strain NT)</name>
    <dbReference type="NCBI Taxonomy" id="386415"/>
    <lineage>
        <taxon>Bacteria</taxon>
        <taxon>Bacillati</taxon>
        <taxon>Bacillota</taxon>
        <taxon>Clostridia</taxon>
        <taxon>Eubacteriales</taxon>
        <taxon>Clostridiaceae</taxon>
        <taxon>Clostridium</taxon>
    </lineage>
</organism>
<gene>
    <name evidence="1" type="primary">fusA</name>
    <name type="ordered locus">NT01CX_1112</name>
</gene>
<proteinExistence type="inferred from homology"/>
<protein>
    <recommendedName>
        <fullName evidence="1">Elongation factor G</fullName>
        <shortName evidence="1">EF-G</shortName>
    </recommendedName>
</protein>